<keyword id="KW-0165">Cleavage on pair of basic residues</keyword>
<keyword id="KW-1015">Disulfide bond</keyword>
<keyword id="KW-0378">Hydrolase</keyword>
<keyword id="KW-0479">Metal-binding</keyword>
<keyword id="KW-0482">Metalloprotease</keyword>
<keyword id="KW-0645">Protease</keyword>
<keyword id="KW-0964">Secreted</keyword>
<keyword id="KW-0732">Signal</keyword>
<keyword id="KW-0843">Virulence</keyword>
<keyword id="KW-0862">Zinc</keyword>
<keyword id="KW-0865">Zymogen</keyword>
<sequence>MKVTILASAILALINGALALPANTPTLDVTLTQVDNTRIKATVKNTGNEKVTFVHLNFFQDAAPVKKVSLFRNATEVEFTGIKRRLLTEGLSDDALTTLAPGATFEDEFDVASTADLTEGGTVTIRTDGFVPITTDRKVSGYIPYQSNELEIEVDAAKAAAVPQAIKLLDRRTKVASCSGSRASALSTALRNAASLANAAASAASSGSSTRFQEYFKTTSSSTRNTVAARFRAVASEASSQSSGKTTYYCTDPYGYCDSNTLAYTLPSSNLIANCDIYYSYLPALTSSCHAQDQATTTLHEFTHAPAVYSPGTDDYAYGYRASTALSASQALLNADTYALFANGTPLLPLSTSTSKCSTLTMVIAVNLNC</sequence>
<proteinExistence type="inferred from homology"/>
<accession>B0Y4X9</accession>
<evidence type="ECO:0000250" key="1"/>
<evidence type="ECO:0000255" key="2"/>
<evidence type="ECO:0000255" key="3">
    <source>
        <dbReference type="PROSITE-ProRule" id="PRU10095"/>
    </source>
</evidence>
<evidence type="ECO:0000305" key="4"/>
<comment type="function">
    <text evidence="1">Secreted metalloproteinase that allows assimilation of proteinaceous substrates. Shows high activities on basic nuclear substrates such as histone and protamine. May be involved in virulence (By similarity).</text>
</comment>
<comment type="catalytic activity">
    <reaction>
        <text>Preferential cleavage of bonds with hydrophobic residues in P1'. Also 3-Asn-|-Gln-4 and 8-Gly-|-Ser-9 bonds in insulin B chain.</text>
        <dbReference type="EC" id="3.4.24.39"/>
    </reaction>
</comment>
<comment type="cofactor">
    <cofactor evidence="1">
        <name>Zn(2+)</name>
        <dbReference type="ChEBI" id="CHEBI:29105"/>
    </cofactor>
    <text evidence="1">Binds 1 zinc ion per subunit.</text>
</comment>
<comment type="subcellular location">
    <subcellularLocation>
        <location evidence="1">Secreted</location>
    </subcellularLocation>
</comment>
<comment type="similarity">
    <text evidence="4">Belongs to the peptidase M35 family.</text>
</comment>
<feature type="signal peptide" evidence="2">
    <location>
        <begin position="1"/>
        <end position="19"/>
    </location>
</feature>
<feature type="propeptide" id="PRO_0000407122" evidence="1">
    <location>
        <begin position="20"/>
        <end position="172"/>
    </location>
</feature>
<feature type="chain" id="PRO_0000407123" description="Neutral protease 2 homolog AFUB_070680">
    <location>
        <begin position="173"/>
        <end position="370"/>
    </location>
</feature>
<feature type="active site" evidence="3">
    <location>
        <position position="301"/>
    </location>
</feature>
<feature type="binding site" evidence="3">
    <location>
        <position position="300"/>
    </location>
    <ligand>
        <name>Zn(2+)</name>
        <dbReference type="ChEBI" id="CHEBI:29105"/>
        <note>catalytic</note>
    </ligand>
</feature>
<feature type="binding site" evidence="3">
    <location>
        <position position="304"/>
    </location>
    <ligand>
        <name>Zn(2+)</name>
        <dbReference type="ChEBI" id="CHEBI:29105"/>
        <note>catalytic</note>
    </ligand>
</feature>
<feature type="binding site" evidence="3">
    <location>
        <position position="315"/>
    </location>
    <ligand>
        <name>Zn(2+)</name>
        <dbReference type="ChEBI" id="CHEBI:29105"/>
        <note>catalytic</note>
    </ligand>
</feature>
<feature type="disulfide bond" evidence="1">
    <location>
        <begin position="178"/>
        <end position="250"/>
    </location>
</feature>
<feature type="disulfide bond" evidence="1">
    <location>
        <begin position="257"/>
        <end position="275"/>
    </location>
</feature>
<name>NPIIB_ASPFC</name>
<organism>
    <name type="scientific">Aspergillus fumigatus (strain CBS 144.89 / FGSC A1163 / CEA10)</name>
    <name type="common">Neosartorya fumigata</name>
    <dbReference type="NCBI Taxonomy" id="451804"/>
    <lineage>
        <taxon>Eukaryota</taxon>
        <taxon>Fungi</taxon>
        <taxon>Dikarya</taxon>
        <taxon>Ascomycota</taxon>
        <taxon>Pezizomycotina</taxon>
        <taxon>Eurotiomycetes</taxon>
        <taxon>Eurotiomycetidae</taxon>
        <taxon>Eurotiales</taxon>
        <taxon>Aspergillaceae</taxon>
        <taxon>Aspergillus</taxon>
        <taxon>Aspergillus subgen. Fumigati</taxon>
    </lineage>
</organism>
<dbReference type="EC" id="3.4.24.39"/>
<dbReference type="EMBL" id="DS499598">
    <property type="protein sequence ID" value="EDP50728.1"/>
    <property type="molecule type" value="Genomic_DNA"/>
</dbReference>
<dbReference type="SMR" id="B0Y4X9"/>
<dbReference type="MEROPS" id="M35.002"/>
<dbReference type="EnsemblFungi" id="EDP50728">
    <property type="protein sequence ID" value="EDP50728"/>
    <property type="gene ID" value="AFUB_070680"/>
</dbReference>
<dbReference type="VEuPathDB" id="FungiDB:AFUB_070680"/>
<dbReference type="HOGENOM" id="CLU_039313_1_1_1"/>
<dbReference type="OrthoDB" id="105382at5052"/>
<dbReference type="PhylomeDB" id="B0Y4X9"/>
<dbReference type="Proteomes" id="UP000001699">
    <property type="component" value="Unassembled WGS sequence"/>
</dbReference>
<dbReference type="GO" id="GO:0005576">
    <property type="term" value="C:extracellular region"/>
    <property type="evidence" value="ECO:0007669"/>
    <property type="project" value="UniProtKB-SubCell"/>
</dbReference>
<dbReference type="GO" id="GO:0046872">
    <property type="term" value="F:metal ion binding"/>
    <property type="evidence" value="ECO:0007669"/>
    <property type="project" value="UniProtKB-KW"/>
</dbReference>
<dbReference type="GO" id="GO:0004222">
    <property type="term" value="F:metalloendopeptidase activity"/>
    <property type="evidence" value="ECO:0007669"/>
    <property type="project" value="InterPro"/>
</dbReference>
<dbReference type="GO" id="GO:0006508">
    <property type="term" value="P:proteolysis"/>
    <property type="evidence" value="ECO:0007669"/>
    <property type="project" value="UniProtKB-KW"/>
</dbReference>
<dbReference type="CDD" id="cd11008">
    <property type="entry name" value="M35_deuterolysin_like"/>
    <property type="match status" value="1"/>
</dbReference>
<dbReference type="Gene3D" id="2.60.40.2970">
    <property type="match status" value="1"/>
</dbReference>
<dbReference type="Gene3D" id="3.40.390.10">
    <property type="entry name" value="Collagenase (Catalytic Domain)"/>
    <property type="match status" value="1"/>
</dbReference>
<dbReference type="InterPro" id="IPR050414">
    <property type="entry name" value="Fungal_M35_metalloproteases"/>
</dbReference>
<dbReference type="InterPro" id="IPR029463">
    <property type="entry name" value="Lys_MEP"/>
</dbReference>
<dbReference type="InterPro" id="IPR024079">
    <property type="entry name" value="MetalloPept_cat_dom_sf"/>
</dbReference>
<dbReference type="InterPro" id="IPR001384">
    <property type="entry name" value="Peptidase_M35"/>
</dbReference>
<dbReference type="PANTHER" id="PTHR37016">
    <property type="match status" value="1"/>
</dbReference>
<dbReference type="PANTHER" id="PTHR37016:SF3">
    <property type="entry name" value="NEUTRAL PROTEASE 2-RELATED"/>
    <property type="match status" value="1"/>
</dbReference>
<dbReference type="Pfam" id="PF02102">
    <property type="entry name" value="Peptidase_M35"/>
    <property type="match status" value="1"/>
</dbReference>
<dbReference type="PRINTS" id="PR00768">
    <property type="entry name" value="DEUTEROLYSIN"/>
</dbReference>
<dbReference type="SMART" id="SM01351">
    <property type="entry name" value="Aspzincin_M35"/>
    <property type="match status" value="1"/>
</dbReference>
<dbReference type="SUPFAM" id="SSF55486">
    <property type="entry name" value="Metalloproteases ('zincins'), catalytic domain"/>
    <property type="match status" value="1"/>
</dbReference>
<dbReference type="PROSITE" id="PS00142">
    <property type="entry name" value="ZINC_PROTEASE"/>
    <property type="match status" value="1"/>
</dbReference>
<protein>
    <recommendedName>
        <fullName>Neutral protease 2 homolog AFUB_070680</fullName>
        <ecNumber>3.4.24.39</ecNumber>
    </recommendedName>
    <alternativeName>
        <fullName>Deuterolysin AFUB_070680</fullName>
    </alternativeName>
</protein>
<gene>
    <name type="ORF">AFUB_070680</name>
</gene>
<reference key="1">
    <citation type="journal article" date="2008" name="PLoS Genet.">
        <title>Genomic islands in the pathogenic filamentous fungus Aspergillus fumigatus.</title>
        <authorList>
            <person name="Fedorova N.D."/>
            <person name="Khaldi N."/>
            <person name="Joardar V.S."/>
            <person name="Maiti R."/>
            <person name="Amedeo P."/>
            <person name="Anderson M.J."/>
            <person name="Crabtree J."/>
            <person name="Silva J.C."/>
            <person name="Badger J.H."/>
            <person name="Albarraq A."/>
            <person name="Angiuoli S."/>
            <person name="Bussey H."/>
            <person name="Bowyer P."/>
            <person name="Cotty P.J."/>
            <person name="Dyer P.S."/>
            <person name="Egan A."/>
            <person name="Galens K."/>
            <person name="Fraser-Liggett C.M."/>
            <person name="Haas B.J."/>
            <person name="Inman J.M."/>
            <person name="Kent R."/>
            <person name="Lemieux S."/>
            <person name="Malavazi I."/>
            <person name="Orvis J."/>
            <person name="Roemer T."/>
            <person name="Ronning C.M."/>
            <person name="Sundaram J.P."/>
            <person name="Sutton G."/>
            <person name="Turner G."/>
            <person name="Venter J.C."/>
            <person name="White O.R."/>
            <person name="Whitty B.R."/>
            <person name="Youngman P."/>
            <person name="Wolfe K.H."/>
            <person name="Goldman G.H."/>
            <person name="Wortman J.R."/>
            <person name="Jiang B."/>
            <person name="Denning D.W."/>
            <person name="Nierman W.C."/>
        </authorList>
    </citation>
    <scope>NUCLEOTIDE SEQUENCE [LARGE SCALE GENOMIC DNA]</scope>
    <source>
        <strain>CBS 144.89 / FGSC A1163 / CEA10</strain>
    </source>
</reference>